<feature type="chain" id="PRO_0000073684" description="Troponin C">
    <location>
        <begin position="1"/>
        <end position="163"/>
    </location>
</feature>
<feature type="domain" description="EF-hand 1" evidence="1">
    <location>
        <begin position="14"/>
        <end position="49"/>
    </location>
</feature>
<feature type="domain" description="EF-hand 2" evidence="1">
    <location>
        <begin position="50"/>
        <end position="85"/>
    </location>
</feature>
<feature type="domain" description="EF-hand 3" evidence="1">
    <location>
        <begin position="90"/>
        <end position="125"/>
    </location>
</feature>
<feature type="domain" description="EF-hand 4" evidence="1">
    <location>
        <begin position="127"/>
        <end position="162"/>
    </location>
</feature>
<feature type="binding site" evidence="1">
    <location>
        <position position="27"/>
    </location>
    <ligand>
        <name>Ca(2+)</name>
        <dbReference type="ChEBI" id="CHEBI:29108"/>
        <label>1</label>
    </ligand>
</feature>
<feature type="binding site" evidence="1">
    <location>
        <position position="29"/>
    </location>
    <ligand>
        <name>Ca(2+)</name>
        <dbReference type="ChEBI" id="CHEBI:29108"/>
        <label>1</label>
    </ligand>
</feature>
<feature type="binding site" evidence="1">
    <location>
        <position position="33"/>
    </location>
    <ligand>
        <name>Ca(2+)</name>
        <dbReference type="ChEBI" id="CHEBI:29108"/>
        <label>1</label>
    </ligand>
</feature>
<feature type="binding site" evidence="1">
    <location>
        <position position="38"/>
    </location>
    <ligand>
        <name>Ca(2+)</name>
        <dbReference type="ChEBI" id="CHEBI:29108"/>
        <label>1</label>
    </ligand>
</feature>
<feature type="binding site" evidence="1">
    <location>
        <position position="63"/>
    </location>
    <ligand>
        <name>Ca(2+)</name>
        <dbReference type="ChEBI" id="CHEBI:29108"/>
        <label>2</label>
    </ligand>
</feature>
<feature type="binding site" evidence="1">
    <location>
        <position position="65"/>
    </location>
    <ligand>
        <name>Ca(2+)</name>
        <dbReference type="ChEBI" id="CHEBI:29108"/>
        <label>2</label>
    </ligand>
</feature>
<feature type="binding site" evidence="1">
    <location>
        <position position="67"/>
    </location>
    <ligand>
        <name>Ca(2+)</name>
        <dbReference type="ChEBI" id="CHEBI:29108"/>
        <label>2</label>
    </ligand>
</feature>
<feature type="binding site" evidence="1">
    <location>
        <position position="69"/>
    </location>
    <ligand>
        <name>Ca(2+)</name>
        <dbReference type="ChEBI" id="CHEBI:29108"/>
        <label>2</label>
    </ligand>
</feature>
<feature type="binding site" evidence="1">
    <location>
        <position position="74"/>
    </location>
    <ligand>
        <name>Ca(2+)</name>
        <dbReference type="ChEBI" id="CHEBI:29108"/>
        <label>2</label>
    </ligand>
</feature>
<feature type="binding site" evidence="1">
    <location>
        <position position="103"/>
    </location>
    <ligand>
        <name>Ca(2+)</name>
        <dbReference type="ChEBI" id="CHEBI:29108"/>
        <label>3</label>
    </ligand>
</feature>
<feature type="binding site" evidence="1">
    <location>
        <position position="105"/>
    </location>
    <ligand>
        <name>Ca(2+)</name>
        <dbReference type="ChEBI" id="CHEBI:29108"/>
        <label>3</label>
    </ligand>
</feature>
<feature type="binding site" evidence="1">
    <location>
        <position position="107"/>
    </location>
    <ligand>
        <name>Ca(2+)</name>
        <dbReference type="ChEBI" id="CHEBI:29108"/>
        <label>3</label>
    </ligand>
</feature>
<feature type="binding site" evidence="1">
    <location>
        <position position="114"/>
    </location>
    <ligand>
        <name>Ca(2+)</name>
        <dbReference type="ChEBI" id="CHEBI:29108"/>
        <label>3</label>
    </ligand>
</feature>
<feature type="modified residue" description="N-acetylserine" evidence="2">
    <location>
        <position position="1"/>
    </location>
</feature>
<feature type="modified residue" description="N6,N6-dimethyllysine; alternate" evidence="2">
    <location>
        <position position="20"/>
    </location>
</feature>
<feature type="modified residue" description="N6-methyllysine; alternate" evidence="2">
    <location>
        <position position="20"/>
    </location>
</feature>
<reference key="1">
    <citation type="journal article" date="1994" name="Eur. J. Biochem.">
        <title>Characterization and primary structure of amphioxus troponin C.</title>
        <authorList>
            <person name="Takagi T."/>
            <person name="Petrova T."/>
            <person name="Comte M."/>
            <person name="Kuster T."/>
            <person name="Heizmann C.W."/>
            <person name="Cox J.A."/>
        </authorList>
    </citation>
    <scope>PROTEIN SEQUENCE</scope>
    <scope>ACETYLATION AT SER-1</scope>
    <scope>METHYLATION AT LYS-20</scope>
    <source>
        <tissue>Muscle</tissue>
    </source>
</reference>
<organism>
    <name type="scientific">Branchiostoma lanceolatum</name>
    <name type="common">Common lancelet</name>
    <name type="synonym">Amphioxus lanceolatum</name>
    <dbReference type="NCBI Taxonomy" id="7740"/>
    <lineage>
        <taxon>Eukaryota</taxon>
        <taxon>Metazoa</taxon>
        <taxon>Chordata</taxon>
        <taxon>Cephalochordata</taxon>
        <taxon>Leptocardii</taxon>
        <taxon>Amphioxiformes</taxon>
        <taxon>Branchiostomatidae</taxon>
        <taxon>Branchiostoma</taxon>
    </lineage>
</organism>
<sequence>SDDYVKARVMFKEEQISEFKMAFDMFDEDGGGDISTKELGTIMKRLGMSISREELQQMIDEVDEDASGTIDFEEFLEMMARAMQDSEREIPDDELRAAFRVLDKNGDGFIDKDEFRALASECAGDDLTDDELLEFMMDYDGNRDGRFDYEEWKEIIQELKVRW</sequence>
<dbReference type="PIR" id="S43240">
    <property type="entry name" value="S43240"/>
</dbReference>
<dbReference type="SMR" id="P80322"/>
<dbReference type="iPTMnet" id="P80322"/>
<dbReference type="GO" id="GO:0016460">
    <property type="term" value="C:myosin II complex"/>
    <property type="evidence" value="ECO:0007669"/>
    <property type="project" value="TreeGrafter"/>
</dbReference>
<dbReference type="GO" id="GO:0005509">
    <property type="term" value="F:calcium ion binding"/>
    <property type="evidence" value="ECO:0007669"/>
    <property type="project" value="InterPro"/>
</dbReference>
<dbReference type="CDD" id="cd00051">
    <property type="entry name" value="EFh"/>
    <property type="match status" value="1"/>
</dbReference>
<dbReference type="CDD" id="cd15898">
    <property type="entry name" value="EFh_PI-PLC"/>
    <property type="match status" value="1"/>
</dbReference>
<dbReference type="FunFam" id="1.10.238.10:FF:000107">
    <property type="entry name" value="Troponin C, skeletal muscle"/>
    <property type="match status" value="1"/>
</dbReference>
<dbReference type="Gene3D" id="1.10.238.10">
    <property type="entry name" value="EF-hand"/>
    <property type="match status" value="2"/>
</dbReference>
<dbReference type="InterPro" id="IPR050230">
    <property type="entry name" value="CALM/Myosin/TropC-like"/>
</dbReference>
<dbReference type="InterPro" id="IPR011992">
    <property type="entry name" value="EF-hand-dom_pair"/>
</dbReference>
<dbReference type="InterPro" id="IPR018247">
    <property type="entry name" value="EF_Hand_1_Ca_BS"/>
</dbReference>
<dbReference type="InterPro" id="IPR002048">
    <property type="entry name" value="EF_hand_dom"/>
</dbReference>
<dbReference type="PANTHER" id="PTHR23048">
    <property type="entry name" value="MYOSIN LIGHT CHAIN 1, 3"/>
    <property type="match status" value="1"/>
</dbReference>
<dbReference type="PANTHER" id="PTHR23048:SF46">
    <property type="entry name" value="TROPONIN C-LIKE ISOFORM X1"/>
    <property type="match status" value="1"/>
</dbReference>
<dbReference type="Pfam" id="PF13499">
    <property type="entry name" value="EF-hand_7"/>
    <property type="match status" value="2"/>
</dbReference>
<dbReference type="SMART" id="SM00054">
    <property type="entry name" value="EFh"/>
    <property type="match status" value="4"/>
</dbReference>
<dbReference type="SUPFAM" id="SSF47473">
    <property type="entry name" value="EF-hand"/>
    <property type="match status" value="1"/>
</dbReference>
<dbReference type="PROSITE" id="PS00018">
    <property type="entry name" value="EF_HAND_1"/>
    <property type="match status" value="3"/>
</dbReference>
<dbReference type="PROSITE" id="PS50222">
    <property type="entry name" value="EF_HAND_2"/>
    <property type="match status" value="4"/>
</dbReference>
<evidence type="ECO:0000255" key="1">
    <source>
        <dbReference type="PROSITE-ProRule" id="PRU00448"/>
    </source>
</evidence>
<evidence type="ECO:0000269" key="2">
    <source>
    </source>
</evidence>
<evidence type="ECO:0000305" key="3"/>
<keyword id="KW-0007">Acetylation</keyword>
<keyword id="KW-0106">Calcium</keyword>
<keyword id="KW-0903">Direct protein sequencing</keyword>
<keyword id="KW-0479">Metal-binding</keyword>
<keyword id="KW-0488">Methylation</keyword>
<keyword id="KW-0514">Muscle protein</keyword>
<keyword id="KW-0677">Repeat</keyword>
<comment type="function">
    <text>Troponin is the central regulatory protein of striated muscle contraction. Tn consists of three components: Tn-I which is the inhibitor of actomyosin ATPase, Tn-T which contains the binding site for tropomyosin and Tn-C. The binding of calcium to Tn-C abolishes the inhibitory action of Tn on actin filaments.</text>
</comment>
<comment type="miscellaneous">
    <text>This protein binds three calcium ions.</text>
</comment>
<comment type="similarity">
    <text evidence="3">Belongs to the troponin C family.</text>
</comment>
<name>TNNC_BRALA</name>
<accession>P80322</accession>
<proteinExistence type="evidence at protein level"/>
<protein>
    <recommendedName>
        <fullName>Troponin C</fullName>
    </recommendedName>
</protein>